<dbReference type="EC" id="4.2.1.11" evidence="1 3"/>
<dbReference type="EMBL" id="AB046715">
    <property type="protein sequence ID" value="BAB07786.1"/>
    <property type="molecule type" value="Genomic_DNA"/>
</dbReference>
<dbReference type="EMBL" id="CP001197">
    <property type="protein sequence ID" value="ACL08754.1"/>
    <property type="molecule type" value="Genomic_DNA"/>
</dbReference>
<dbReference type="EMBL" id="AB005550">
    <property type="protein sequence ID" value="BAA21475.1"/>
    <property type="molecule type" value="Genomic_DNA"/>
</dbReference>
<dbReference type="SMR" id="O32513"/>
<dbReference type="STRING" id="883.DvMF_1810"/>
<dbReference type="KEGG" id="dvm:DvMF_1810"/>
<dbReference type="eggNOG" id="COG0148">
    <property type="taxonomic scope" value="Bacteria"/>
</dbReference>
<dbReference type="HOGENOM" id="CLU_031223_2_1_7"/>
<dbReference type="OrthoDB" id="9804716at2"/>
<dbReference type="UniPathway" id="UPA00109">
    <property type="reaction ID" value="UER00187"/>
</dbReference>
<dbReference type="GO" id="GO:0009986">
    <property type="term" value="C:cell surface"/>
    <property type="evidence" value="ECO:0007669"/>
    <property type="project" value="UniProtKB-SubCell"/>
</dbReference>
<dbReference type="GO" id="GO:0005576">
    <property type="term" value="C:extracellular region"/>
    <property type="evidence" value="ECO:0007669"/>
    <property type="project" value="UniProtKB-SubCell"/>
</dbReference>
<dbReference type="GO" id="GO:0000015">
    <property type="term" value="C:phosphopyruvate hydratase complex"/>
    <property type="evidence" value="ECO:0007669"/>
    <property type="project" value="InterPro"/>
</dbReference>
<dbReference type="GO" id="GO:0000287">
    <property type="term" value="F:magnesium ion binding"/>
    <property type="evidence" value="ECO:0007669"/>
    <property type="project" value="UniProtKB-UniRule"/>
</dbReference>
<dbReference type="GO" id="GO:0004634">
    <property type="term" value="F:phosphopyruvate hydratase activity"/>
    <property type="evidence" value="ECO:0007669"/>
    <property type="project" value="UniProtKB-UniRule"/>
</dbReference>
<dbReference type="GO" id="GO:0006096">
    <property type="term" value="P:glycolytic process"/>
    <property type="evidence" value="ECO:0007669"/>
    <property type="project" value="UniProtKB-UniRule"/>
</dbReference>
<dbReference type="CDD" id="cd03313">
    <property type="entry name" value="enolase"/>
    <property type="match status" value="1"/>
</dbReference>
<dbReference type="FunFam" id="3.20.20.120:FF:000001">
    <property type="entry name" value="Enolase"/>
    <property type="match status" value="1"/>
</dbReference>
<dbReference type="FunFam" id="3.30.390.10:FF:000001">
    <property type="entry name" value="Enolase"/>
    <property type="match status" value="1"/>
</dbReference>
<dbReference type="Gene3D" id="3.20.20.120">
    <property type="entry name" value="Enolase-like C-terminal domain"/>
    <property type="match status" value="1"/>
</dbReference>
<dbReference type="Gene3D" id="3.30.390.10">
    <property type="entry name" value="Enolase-like, N-terminal domain"/>
    <property type="match status" value="1"/>
</dbReference>
<dbReference type="HAMAP" id="MF_00318">
    <property type="entry name" value="Enolase"/>
    <property type="match status" value="1"/>
</dbReference>
<dbReference type="InterPro" id="IPR000941">
    <property type="entry name" value="Enolase"/>
</dbReference>
<dbReference type="InterPro" id="IPR036849">
    <property type="entry name" value="Enolase-like_C_sf"/>
</dbReference>
<dbReference type="InterPro" id="IPR029017">
    <property type="entry name" value="Enolase-like_N"/>
</dbReference>
<dbReference type="InterPro" id="IPR020810">
    <property type="entry name" value="Enolase_C"/>
</dbReference>
<dbReference type="InterPro" id="IPR020809">
    <property type="entry name" value="Enolase_CS"/>
</dbReference>
<dbReference type="InterPro" id="IPR020811">
    <property type="entry name" value="Enolase_N"/>
</dbReference>
<dbReference type="NCBIfam" id="TIGR01060">
    <property type="entry name" value="eno"/>
    <property type="match status" value="1"/>
</dbReference>
<dbReference type="PANTHER" id="PTHR11902">
    <property type="entry name" value="ENOLASE"/>
    <property type="match status" value="1"/>
</dbReference>
<dbReference type="PANTHER" id="PTHR11902:SF1">
    <property type="entry name" value="ENOLASE"/>
    <property type="match status" value="1"/>
</dbReference>
<dbReference type="Pfam" id="PF00113">
    <property type="entry name" value="Enolase_C"/>
    <property type="match status" value="1"/>
</dbReference>
<dbReference type="Pfam" id="PF03952">
    <property type="entry name" value="Enolase_N"/>
    <property type="match status" value="1"/>
</dbReference>
<dbReference type="PIRSF" id="PIRSF001400">
    <property type="entry name" value="Enolase"/>
    <property type="match status" value="1"/>
</dbReference>
<dbReference type="PRINTS" id="PR00148">
    <property type="entry name" value="ENOLASE"/>
</dbReference>
<dbReference type="SFLD" id="SFLDF00002">
    <property type="entry name" value="enolase"/>
    <property type="match status" value="1"/>
</dbReference>
<dbReference type="SFLD" id="SFLDG00178">
    <property type="entry name" value="enolase"/>
    <property type="match status" value="1"/>
</dbReference>
<dbReference type="SMART" id="SM01192">
    <property type="entry name" value="Enolase_C"/>
    <property type="match status" value="1"/>
</dbReference>
<dbReference type="SMART" id="SM01193">
    <property type="entry name" value="Enolase_N"/>
    <property type="match status" value="1"/>
</dbReference>
<dbReference type="SUPFAM" id="SSF51604">
    <property type="entry name" value="Enolase C-terminal domain-like"/>
    <property type="match status" value="1"/>
</dbReference>
<dbReference type="SUPFAM" id="SSF54826">
    <property type="entry name" value="Enolase N-terminal domain-like"/>
    <property type="match status" value="1"/>
</dbReference>
<dbReference type="PROSITE" id="PS00164">
    <property type="entry name" value="ENOLASE"/>
    <property type="match status" value="1"/>
</dbReference>
<evidence type="ECO:0000255" key="1">
    <source>
        <dbReference type="HAMAP-Rule" id="MF_00318"/>
    </source>
</evidence>
<evidence type="ECO:0000256" key="2">
    <source>
        <dbReference type="SAM" id="MobiDB-lite"/>
    </source>
</evidence>
<evidence type="ECO:0000269" key="3">
    <source>
    </source>
</evidence>
<evidence type="ECO:0000305" key="4"/>
<name>ENO_NITV9</name>
<proteinExistence type="evidence at protein level"/>
<feature type="chain" id="PRO_0000133881" description="Enolase">
    <location>
        <begin position="1"/>
        <end position="434"/>
    </location>
</feature>
<feature type="region of interest" description="Disordered" evidence="2">
    <location>
        <begin position="29"/>
        <end position="56"/>
    </location>
</feature>
<feature type="compositionally biased region" description="Basic and acidic residues" evidence="2">
    <location>
        <begin position="47"/>
        <end position="56"/>
    </location>
</feature>
<feature type="active site" description="Proton donor" evidence="1">
    <location>
        <position position="205"/>
    </location>
</feature>
<feature type="active site" description="Proton acceptor" evidence="1">
    <location>
        <position position="337"/>
    </location>
</feature>
<feature type="binding site" evidence="1">
    <location>
        <position position="163"/>
    </location>
    <ligand>
        <name>(2R)-2-phosphoglycerate</name>
        <dbReference type="ChEBI" id="CHEBI:58289"/>
    </ligand>
</feature>
<feature type="binding site" evidence="1">
    <location>
        <position position="242"/>
    </location>
    <ligand>
        <name>Mg(2+)</name>
        <dbReference type="ChEBI" id="CHEBI:18420"/>
    </ligand>
</feature>
<feature type="binding site" evidence="1">
    <location>
        <position position="285"/>
    </location>
    <ligand>
        <name>Mg(2+)</name>
        <dbReference type="ChEBI" id="CHEBI:18420"/>
    </ligand>
</feature>
<feature type="binding site" evidence="1">
    <location>
        <position position="312"/>
    </location>
    <ligand>
        <name>Mg(2+)</name>
        <dbReference type="ChEBI" id="CHEBI:18420"/>
    </ligand>
</feature>
<feature type="binding site" evidence="1">
    <location>
        <position position="337"/>
    </location>
    <ligand>
        <name>(2R)-2-phosphoglycerate</name>
        <dbReference type="ChEBI" id="CHEBI:58289"/>
    </ligand>
</feature>
<feature type="binding site" evidence="1">
    <location>
        <position position="366"/>
    </location>
    <ligand>
        <name>(2R)-2-phosphoglycerate</name>
        <dbReference type="ChEBI" id="CHEBI:58289"/>
    </ligand>
</feature>
<feature type="binding site" evidence="1">
    <location>
        <position position="367"/>
    </location>
    <ligand>
        <name>(2R)-2-phosphoglycerate</name>
        <dbReference type="ChEBI" id="CHEBI:58289"/>
    </ligand>
</feature>
<feature type="binding site" evidence="1">
    <location>
        <position position="388"/>
    </location>
    <ligand>
        <name>(2R)-2-phosphoglycerate</name>
        <dbReference type="ChEBI" id="CHEBI:58289"/>
    </ligand>
</feature>
<feature type="sequence conflict" description="In Ref. 3; BAA21475." evidence="4" ref="3">
    <original>R</original>
    <variation>G</variation>
    <location>
        <position position="34"/>
    </location>
</feature>
<feature type="sequence conflict" description="In Ref. 3; BAA21475." evidence="4" ref="3">
    <original>D</original>
    <variation>N</variation>
    <location>
        <position position="83"/>
    </location>
</feature>
<feature type="sequence conflict" description="In Ref. 3; BAA21475." evidence="4" ref="3">
    <original>G</original>
    <variation>A</variation>
    <location>
        <position position="113"/>
    </location>
</feature>
<feature type="sequence conflict" description="In Ref. 3; BAA21475." evidence="4" ref="3">
    <original>TAR</original>
    <variation>HRA</variation>
    <location>
        <begin position="118"/>
        <end position="120"/>
    </location>
</feature>
<organism>
    <name type="scientific">Nitratidesulfovibrio vulgaris (strain DSM 19637 / Miyazaki F)</name>
    <name type="common">Desulfovibrio vulgaris</name>
    <dbReference type="NCBI Taxonomy" id="883"/>
    <lineage>
        <taxon>Bacteria</taxon>
        <taxon>Pseudomonadati</taxon>
        <taxon>Thermodesulfobacteriota</taxon>
        <taxon>Desulfovibrionia</taxon>
        <taxon>Desulfovibrionales</taxon>
        <taxon>Desulfovibrionaceae</taxon>
        <taxon>Nitratidesulfovibrio</taxon>
    </lineage>
</organism>
<reference key="1">
    <citation type="journal article" date="2004" name="Biochim. Biophys. Acta">
        <title>Cloning and expression of the enolase gene from Desulfovibrio vulgaris (Miyazaki F).</title>
        <authorList>
            <person name="Kitamura M."/>
            <person name="Takayama Y."/>
            <person name="Kojima S."/>
            <person name="Kohno K."/>
            <person name="Ogata H."/>
            <person name="Higuchi Y."/>
            <person name="Inoue H."/>
        </authorList>
    </citation>
    <scope>NUCLEOTIDE SEQUENCE [GENOMIC DNA]</scope>
    <scope>FUNCTION</scope>
    <scope>CATALYTIC ACTIVITY</scope>
    <scope>SUBUNIT</scope>
    <scope>BIOPHYSICOCHEMICAL PROPERTIES</scope>
    <scope>INDUCTION</scope>
    <source>
        <strain>DSM 19637 / Miyazaki F</strain>
    </source>
</reference>
<reference key="2">
    <citation type="submission" date="2008-10" db="EMBL/GenBank/DDBJ databases">
        <title>Complete sequence of Desulfovibrio vulgaris str. 'Miyazaki F'.</title>
        <authorList>
            <person name="Lucas S."/>
            <person name="Copeland A."/>
            <person name="Lapidus A."/>
            <person name="Glavina del Rio T."/>
            <person name="Dalin E."/>
            <person name="Tice H."/>
            <person name="Bruce D."/>
            <person name="Goodwin L."/>
            <person name="Pitluck S."/>
            <person name="Sims D."/>
            <person name="Brettin T."/>
            <person name="Detter J.C."/>
            <person name="Han C."/>
            <person name="Larimer F."/>
            <person name="Land M."/>
            <person name="Hauser L."/>
            <person name="Kyrpides N."/>
            <person name="Mikhailova N."/>
            <person name="Hazen T.C."/>
            <person name="Richardson P."/>
        </authorList>
    </citation>
    <scope>NUCLEOTIDE SEQUENCE [LARGE SCALE GENOMIC DNA]</scope>
    <source>
        <strain>DSM 19637 / Miyazaki F</strain>
    </source>
</reference>
<reference key="3">
    <citation type="submission" date="1997-07" db="EMBL/GenBank/DDBJ databases">
        <authorList>
            <person name="Kitamura M."/>
            <person name="Konishi T."/>
            <person name="Kawanishi K."/>
            <person name="Ohashi K."/>
            <person name="Kishida M."/>
            <person name="Kohno K."/>
            <person name="Akutsu H."/>
            <person name="Kumagai I."/>
            <person name="Nakaya T."/>
        </authorList>
    </citation>
    <scope>NUCLEOTIDE SEQUENCE [GENOMIC DNA] OF 1-165</scope>
</reference>
<comment type="function">
    <text evidence="1 3">Catalyzes the reversible conversion of 2-phosphoglycerate (2-PG) into phosphoenolpyruvate (PEP) (PubMed:14746912). It is essential for the degradation of carbohydrates via glycolysis.</text>
</comment>
<comment type="catalytic activity">
    <reaction evidence="1 3">
        <text>(2R)-2-phosphoglycerate = phosphoenolpyruvate + H2O</text>
        <dbReference type="Rhea" id="RHEA:10164"/>
        <dbReference type="ChEBI" id="CHEBI:15377"/>
        <dbReference type="ChEBI" id="CHEBI:58289"/>
        <dbReference type="ChEBI" id="CHEBI:58702"/>
        <dbReference type="EC" id="4.2.1.11"/>
    </reaction>
    <physiologicalReaction direction="left-to-right" evidence="3">
        <dbReference type="Rhea" id="RHEA:10165"/>
    </physiologicalReaction>
    <physiologicalReaction direction="right-to-left" evidence="3">
        <dbReference type="Rhea" id="RHEA:10166"/>
    </physiologicalReaction>
</comment>
<comment type="cofactor">
    <cofactor evidence="1">
        <name>Mg(2+)</name>
        <dbReference type="ChEBI" id="CHEBI:18420"/>
    </cofactor>
    <text evidence="1">Binds a second Mg(2+) ion via substrate during catalysis.</text>
</comment>
<comment type="biophysicochemical properties">
    <kinetics>
        <KM evidence="3">136 uM for 2-phosphoglycerate (at 25 degrees Celsius and pH 8)</KM>
        <KM evidence="3">674 uM for phosphoenolpyruvate (at 25 degrees Celsius and pH 8)</KM>
    </kinetics>
    <phDependence>
        <text evidence="3">Optimum pH is 7.8-8.1.</text>
    </phDependence>
</comment>
<comment type="pathway">
    <text evidence="1">Carbohydrate degradation; glycolysis; pyruvate from D-glyceraldehyde 3-phosphate: step 4/5.</text>
</comment>
<comment type="subunit">
    <text evidence="3">Homooctamer.</text>
</comment>
<comment type="subcellular location">
    <subcellularLocation>
        <location evidence="1">Cytoplasm</location>
    </subcellularLocation>
    <subcellularLocation>
        <location evidence="1">Secreted</location>
    </subcellularLocation>
    <subcellularLocation>
        <location evidence="1">Cell surface</location>
    </subcellularLocation>
    <text evidence="1">Fractions of enolase are present in both the cytoplasm and on the cell surface.</text>
</comment>
<comment type="induction">
    <text evidence="3">Transcribed when grown on lactate, glycerol and glucose (PubMed:14746912).</text>
</comment>
<comment type="similarity">
    <text evidence="1">Belongs to the enolase family.</text>
</comment>
<sequence length="434" mass="46689">MSTIVSVWAREILDSRGNPTVEVEVSLESGHTGRAAVPSGASTGSREALEMRDGDKGRYKGKGVEKAVDNVMGEIAEAIVGLDSLRQVQVDNTLLDLDGTDNKSRLGANAMLGVSLATARAASSFLGLPLYQYLGGVNAKVLPVPLMNIINGGAHAPNNLDIQEFMIMPIGAATFRDALRMGAETFHTLKALLAADGHVTSVGDEGGFAPNLKNHDEAFRYIMKAIEEAGYIPGAEIALAIDAAASEFHKDGKYVLAGEGKNLSNSEMVEWLGEFTTRYPLISIEDGLAEADWDGWRELTYKLGDTIQLVGDDIFVTNPDILAEGIDEGVANSILIKLNQIGTLTETLDTIEMAKQAAYTTVISHRSGETEDHFISDLAVGLNAGQIKTGSLCRSDRLAKYNQLLRIEEDLDDTGIYFGPMMSSHFGFEEEGEE</sequence>
<gene>
    <name evidence="1" type="primary">eno</name>
    <name type="ordered locus">DvMF_1810</name>
</gene>
<protein>
    <recommendedName>
        <fullName evidence="1">Enolase</fullName>
        <ecNumber evidence="1 3">4.2.1.11</ecNumber>
    </recommendedName>
    <alternativeName>
        <fullName evidence="1">2-phospho-D-glycerate hydro-lyase</fullName>
    </alternativeName>
    <alternativeName>
        <fullName evidence="1">2-phosphoglycerate dehydratase</fullName>
    </alternativeName>
</protein>
<accession>O32513</accession>
<accession>B8DMB0</accession>
<accession>Q9KVZ6</accession>
<keyword id="KW-0963">Cytoplasm</keyword>
<keyword id="KW-0324">Glycolysis</keyword>
<keyword id="KW-0456">Lyase</keyword>
<keyword id="KW-0460">Magnesium</keyword>
<keyword id="KW-0479">Metal-binding</keyword>
<keyword id="KW-0964">Secreted</keyword>